<reference key="1">
    <citation type="journal article" date="2011" name="J. Bacteriol.">
        <title>Genome of Ochrobactrum anthropi ATCC 49188 T, a versatile opportunistic pathogen and symbiont of several eukaryotic hosts.</title>
        <authorList>
            <person name="Chain P.S."/>
            <person name="Lang D.M."/>
            <person name="Comerci D.J."/>
            <person name="Malfatti S.A."/>
            <person name="Vergez L.M."/>
            <person name="Shin M."/>
            <person name="Ugalde R.A."/>
            <person name="Garcia E."/>
            <person name="Tolmasky M.E."/>
        </authorList>
    </citation>
    <scope>NUCLEOTIDE SEQUENCE [LARGE SCALE GENOMIC DNA]</scope>
    <source>
        <strain>ATCC 49188 / DSM 6882 / CCUG 24695 / JCM 21032 / LMG 3331 / NBRC 15819 / NCTC 12168 / Alc 37</strain>
    </source>
</reference>
<protein>
    <recommendedName>
        <fullName evidence="1">Pyridoxine/pyridoxamine 5'-phosphate oxidase</fullName>
        <ecNumber evidence="1">1.4.3.5</ecNumber>
    </recommendedName>
    <alternativeName>
        <fullName evidence="1">PNP/PMP oxidase</fullName>
        <shortName evidence="1">PNPOx</shortName>
    </alternativeName>
    <alternativeName>
        <fullName evidence="1">Pyridoxal 5'-phosphate synthase</fullName>
    </alternativeName>
</protein>
<accession>A6WWA8</accession>
<sequence length="203" mass="23233">MTNASDDFTESSQPFKLFADWLTDAKASEPNDPNAVALATVDPDGLPNVRMVLLKDFDEQGFVFYTNYESTKGKEILSAEKAAMCFHWKTLRRQVRVRGAVEKVSDAEADAYYASRPRGSRIGAWASKQSRPLESRFALEKAVAEYTAKYAIGDIPRPSYWSGFRIRPVSIEFWHDRAFRLHDRVLFTRPAPEGDWNKERLYP</sequence>
<keyword id="KW-0285">Flavoprotein</keyword>
<keyword id="KW-0288">FMN</keyword>
<keyword id="KW-0560">Oxidoreductase</keyword>
<keyword id="KW-0664">Pyridoxine biosynthesis</keyword>
<keyword id="KW-1185">Reference proteome</keyword>
<proteinExistence type="inferred from homology"/>
<dbReference type="EC" id="1.4.3.5" evidence="1"/>
<dbReference type="EMBL" id="CP000758">
    <property type="protein sequence ID" value="ABS13262.1"/>
    <property type="status" value="ALT_INIT"/>
    <property type="molecule type" value="Genomic_DNA"/>
</dbReference>
<dbReference type="RefSeq" id="WP_029375899.1">
    <property type="nucleotide sequence ID" value="NC_009667.1"/>
</dbReference>
<dbReference type="SMR" id="A6WWA8"/>
<dbReference type="STRING" id="439375.Oant_0531"/>
<dbReference type="GeneID" id="61316701"/>
<dbReference type="KEGG" id="oan:Oant_0531"/>
<dbReference type="eggNOG" id="COG0259">
    <property type="taxonomic scope" value="Bacteria"/>
</dbReference>
<dbReference type="HOGENOM" id="CLU_032263_2_3_5"/>
<dbReference type="UniPathway" id="UPA01068">
    <property type="reaction ID" value="UER00304"/>
</dbReference>
<dbReference type="UniPathway" id="UPA01068">
    <property type="reaction ID" value="UER00305"/>
</dbReference>
<dbReference type="Proteomes" id="UP000002301">
    <property type="component" value="Chromosome 1"/>
</dbReference>
<dbReference type="GO" id="GO:0010181">
    <property type="term" value="F:FMN binding"/>
    <property type="evidence" value="ECO:0007669"/>
    <property type="project" value="UniProtKB-UniRule"/>
</dbReference>
<dbReference type="GO" id="GO:0004733">
    <property type="term" value="F:pyridoxamine phosphate oxidase activity"/>
    <property type="evidence" value="ECO:0007669"/>
    <property type="project" value="UniProtKB-UniRule"/>
</dbReference>
<dbReference type="GO" id="GO:0008615">
    <property type="term" value="P:pyridoxine biosynthetic process"/>
    <property type="evidence" value="ECO:0007669"/>
    <property type="project" value="UniProtKB-KW"/>
</dbReference>
<dbReference type="Gene3D" id="2.30.110.10">
    <property type="entry name" value="Electron Transport, Fmn-binding Protein, Chain A"/>
    <property type="match status" value="1"/>
</dbReference>
<dbReference type="HAMAP" id="MF_01629">
    <property type="entry name" value="PdxH"/>
    <property type="match status" value="1"/>
</dbReference>
<dbReference type="InterPro" id="IPR000659">
    <property type="entry name" value="Pyridox_Oxase"/>
</dbReference>
<dbReference type="InterPro" id="IPR019740">
    <property type="entry name" value="Pyridox_Oxase_CS"/>
</dbReference>
<dbReference type="InterPro" id="IPR011576">
    <property type="entry name" value="Pyridox_Oxase_N"/>
</dbReference>
<dbReference type="InterPro" id="IPR019576">
    <property type="entry name" value="Pyridoxamine_oxidase_dimer_C"/>
</dbReference>
<dbReference type="InterPro" id="IPR012349">
    <property type="entry name" value="Split_barrel_FMN-bd"/>
</dbReference>
<dbReference type="NCBIfam" id="TIGR00558">
    <property type="entry name" value="pdxH"/>
    <property type="match status" value="1"/>
</dbReference>
<dbReference type="NCBIfam" id="NF004231">
    <property type="entry name" value="PRK05679.1"/>
    <property type="match status" value="1"/>
</dbReference>
<dbReference type="PANTHER" id="PTHR10851:SF0">
    <property type="entry name" value="PYRIDOXINE-5'-PHOSPHATE OXIDASE"/>
    <property type="match status" value="1"/>
</dbReference>
<dbReference type="PANTHER" id="PTHR10851">
    <property type="entry name" value="PYRIDOXINE-5-PHOSPHATE OXIDASE"/>
    <property type="match status" value="1"/>
</dbReference>
<dbReference type="Pfam" id="PF10590">
    <property type="entry name" value="PNP_phzG_C"/>
    <property type="match status" value="1"/>
</dbReference>
<dbReference type="Pfam" id="PF01243">
    <property type="entry name" value="PNPOx_N"/>
    <property type="match status" value="1"/>
</dbReference>
<dbReference type="PIRSF" id="PIRSF000190">
    <property type="entry name" value="Pyd_amn-ph_oxd"/>
    <property type="match status" value="1"/>
</dbReference>
<dbReference type="SUPFAM" id="SSF50475">
    <property type="entry name" value="FMN-binding split barrel"/>
    <property type="match status" value="1"/>
</dbReference>
<dbReference type="PROSITE" id="PS01064">
    <property type="entry name" value="PYRIDOX_OXIDASE"/>
    <property type="match status" value="1"/>
</dbReference>
<name>PDXH_BRUA4</name>
<comment type="function">
    <text evidence="1">Catalyzes the oxidation of either pyridoxine 5'-phosphate (PNP) or pyridoxamine 5'-phosphate (PMP) into pyridoxal 5'-phosphate (PLP).</text>
</comment>
<comment type="catalytic activity">
    <reaction evidence="1">
        <text>pyridoxamine 5'-phosphate + O2 + H2O = pyridoxal 5'-phosphate + H2O2 + NH4(+)</text>
        <dbReference type="Rhea" id="RHEA:15817"/>
        <dbReference type="ChEBI" id="CHEBI:15377"/>
        <dbReference type="ChEBI" id="CHEBI:15379"/>
        <dbReference type="ChEBI" id="CHEBI:16240"/>
        <dbReference type="ChEBI" id="CHEBI:28938"/>
        <dbReference type="ChEBI" id="CHEBI:58451"/>
        <dbReference type="ChEBI" id="CHEBI:597326"/>
        <dbReference type="EC" id="1.4.3.5"/>
    </reaction>
</comment>
<comment type="catalytic activity">
    <reaction evidence="1">
        <text>pyridoxine 5'-phosphate + O2 = pyridoxal 5'-phosphate + H2O2</text>
        <dbReference type="Rhea" id="RHEA:15149"/>
        <dbReference type="ChEBI" id="CHEBI:15379"/>
        <dbReference type="ChEBI" id="CHEBI:16240"/>
        <dbReference type="ChEBI" id="CHEBI:58589"/>
        <dbReference type="ChEBI" id="CHEBI:597326"/>
        <dbReference type="EC" id="1.4.3.5"/>
    </reaction>
</comment>
<comment type="cofactor">
    <cofactor evidence="1">
        <name>FMN</name>
        <dbReference type="ChEBI" id="CHEBI:58210"/>
    </cofactor>
    <text evidence="1">Binds 1 FMN per subunit.</text>
</comment>
<comment type="pathway">
    <text evidence="1">Cofactor metabolism; pyridoxal 5'-phosphate salvage; pyridoxal 5'-phosphate from pyridoxamine 5'-phosphate: step 1/1.</text>
</comment>
<comment type="pathway">
    <text evidence="1">Cofactor metabolism; pyridoxal 5'-phosphate salvage; pyridoxal 5'-phosphate from pyridoxine 5'-phosphate: step 1/1.</text>
</comment>
<comment type="subunit">
    <text evidence="1">Homodimer.</text>
</comment>
<comment type="similarity">
    <text evidence="1">Belongs to the pyridoxamine 5'-phosphate oxidase family.</text>
</comment>
<comment type="sequence caution" evidence="2">
    <conflict type="erroneous initiation">
        <sequence resource="EMBL-CDS" id="ABS13262"/>
    </conflict>
</comment>
<evidence type="ECO:0000255" key="1">
    <source>
        <dbReference type="HAMAP-Rule" id="MF_01629"/>
    </source>
</evidence>
<evidence type="ECO:0000305" key="2"/>
<feature type="chain" id="PRO_0000335793" description="Pyridoxine/pyridoxamine 5'-phosphate oxidase">
    <location>
        <begin position="1"/>
        <end position="203"/>
    </location>
</feature>
<feature type="binding site" evidence="1">
    <location>
        <begin position="50"/>
        <end position="55"/>
    </location>
    <ligand>
        <name>FMN</name>
        <dbReference type="ChEBI" id="CHEBI:58210"/>
    </ligand>
</feature>
<feature type="binding site" evidence="1">
    <location>
        <position position="55"/>
    </location>
    <ligand>
        <name>substrate</name>
    </ligand>
</feature>
<feature type="binding site" evidence="1">
    <location>
        <begin position="65"/>
        <end position="66"/>
    </location>
    <ligand>
        <name>FMN</name>
        <dbReference type="ChEBI" id="CHEBI:58210"/>
    </ligand>
</feature>
<feature type="binding site" evidence="1">
    <location>
        <position position="72"/>
    </location>
    <ligand>
        <name>FMN</name>
        <dbReference type="ChEBI" id="CHEBI:58210"/>
    </ligand>
</feature>
<feature type="binding site" evidence="1">
    <location>
        <position position="94"/>
    </location>
    <ligand>
        <name>FMN</name>
        <dbReference type="ChEBI" id="CHEBI:58210"/>
    </ligand>
</feature>
<feature type="binding site" evidence="1">
    <location>
        <position position="112"/>
    </location>
    <ligand>
        <name>substrate</name>
    </ligand>
</feature>
<feature type="binding site" evidence="1">
    <location>
        <position position="116"/>
    </location>
    <ligand>
        <name>substrate</name>
    </ligand>
</feature>
<feature type="binding site" evidence="1">
    <location>
        <position position="120"/>
    </location>
    <ligand>
        <name>substrate</name>
    </ligand>
</feature>
<feature type="binding site" evidence="1">
    <location>
        <begin position="129"/>
        <end position="130"/>
    </location>
    <ligand>
        <name>FMN</name>
        <dbReference type="ChEBI" id="CHEBI:58210"/>
    </ligand>
</feature>
<feature type="binding site" evidence="1">
    <location>
        <position position="174"/>
    </location>
    <ligand>
        <name>FMN</name>
        <dbReference type="ChEBI" id="CHEBI:58210"/>
    </ligand>
</feature>
<feature type="binding site" evidence="1">
    <location>
        <begin position="180"/>
        <end position="182"/>
    </location>
    <ligand>
        <name>substrate</name>
    </ligand>
</feature>
<feature type="binding site" evidence="1">
    <location>
        <position position="184"/>
    </location>
    <ligand>
        <name>FMN</name>
        <dbReference type="ChEBI" id="CHEBI:58210"/>
    </ligand>
</feature>
<gene>
    <name evidence="1" type="primary">pdxH</name>
    <name type="ordered locus">Oant_0531</name>
</gene>
<organism>
    <name type="scientific">Brucella anthropi (strain ATCC 49188 / DSM 6882 / CCUG 24695 / JCM 21032 / LMG 3331 / NBRC 15819 / NCTC 12168 / Alc 37)</name>
    <name type="common">Ochrobactrum anthropi</name>
    <dbReference type="NCBI Taxonomy" id="439375"/>
    <lineage>
        <taxon>Bacteria</taxon>
        <taxon>Pseudomonadati</taxon>
        <taxon>Pseudomonadota</taxon>
        <taxon>Alphaproteobacteria</taxon>
        <taxon>Hyphomicrobiales</taxon>
        <taxon>Brucellaceae</taxon>
        <taxon>Brucella/Ochrobactrum group</taxon>
        <taxon>Brucella</taxon>
    </lineage>
</organism>